<keyword id="KW-0067">ATP-binding</keyword>
<keyword id="KW-0460">Magnesium</keyword>
<keyword id="KW-0479">Metal-binding</keyword>
<keyword id="KW-0547">Nucleotide-binding</keyword>
<keyword id="KW-0548">Nucleotidyltransferase</keyword>
<keyword id="KW-0692">RNA repair</keyword>
<keyword id="KW-0694">RNA-binding</keyword>
<keyword id="KW-0808">Transferase</keyword>
<keyword id="KW-0819">tRNA processing</keyword>
<organism>
    <name type="scientific">Streptococcus thermophilus (strain CNRZ 1066)</name>
    <dbReference type="NCBI Taxonomy" id="299768"/>
    <lineage>
        <taxon>Bacteria</taxon>
        <taxon>Bacillati</taxon>
        <taxon>Bacillota</taxon>
        <taxon>Bacilli</taxon>
        <taxon>Lactobacillales</taxon>
        <taxon>Streptococcaceae</taxon>
        <taxon>Streptococcus</taxon>
    </lineage>
</organism>
<name>CCA_STRT1</name>
<gene>
    <name evidence="1" type="primary">cca</name>
    <name type="ordered locus">str0425</name>
</gene>
<sequence length="402" mass="46217">MKLSYLPSEFQKALPILEKIKAAGFEAYFVGGSVRDALLNRPIHDVDIASSSYPEETKQIFERTVDIGIEHGTVLVLENGGEYEVTTFRTEDVYVDYRRPSSVSFVRSLEEDLKRRDFTVNAFALNENAEVIDKFNGLADLDNRVLRAVGKAEERFNEDALRIMRGLRFAASLDFDIEEKTFEAMTSHAFLLEKISIERSFIEFDKLLLAPHWKKGIKALLATKAYQYLPDFQETAEEWQSFVADYAEDFRFTSSEQAWAATLLALKHDNPRSFLKKWKTSVNFQKTVQSLIEIFRFRMEREVTKQDVYHYGKDLLKEAETLRQAQRLDVDYERIAELDGQLLIHDKHEIVVNGGKLMKELGFKPGPDLGRTLRAIENAIVDGELANDEESIMAFVQAMKQV</sequence>
<dbReference type="EC" id="2.7.7.72" evidence="1"/>
<dbReference type="EMBL" id="CP000024">
    <property type="protein sequence ID" value="AAV62026.1"/>
    <property type="molecule type" value="Genomic_DNA"/>
</dbReference>
<dbReference type="RefSeq" id="WP_004197277.1">
    <property type="nucleotide sequence ID" value="NC_006449.1"/>
</dbReference>
<dbReference type="SMR" id="Q5M153"/>
<dbReference type="KEGG" id="stc:str0425"/>
<dbReference type="HOGENOM" id="CLU_015961_3_0_9"/>
<dbReference type="GO" id="GO:0005524">
    <property type="term" value="F:ATP binding"/>
    <property type="evidence" value="ECO:0007669"/>
    <property type="project" value="UniProtKB-UniRule"/>
</dbReference>
<dbReference type="GO" id="GO:0004810">
    <property type="term" value="F:CCA tRNA nucleotidyltransferase activity"/>
    <property type="evidence" value="ECO:0007669"/>
    <property type="project" value="UniProtKB-UniRule"/>
</dbReference>
<dbReference type="GO" id="GO:0000287">
    <property type="term" value="F:magnesium ion binding"/>
    <property type="evidence" value="ECO:0007669"/>
    <property type="project" value="UniProtKB-UniRule"/>
</dbReference>
<dbReference type="GO" id="GO:0000049">
    <property type="term" value="F:tRNA binding"/>
    <property type="evidence" value="ECO:0007669"/>
    <property type="project" value="UniProtKB-UniRule"/>
</dbReference>
<dbReference type="GO" id="GO:0042245">
    <property type="term" value="P:RNA repair"/>
    <property type="evidence" value="ECO:0007669"/>
    <property type="project" value="UniProtKB-KW"/>
</dbReference>
<dbReference type="GO" id="GO:0001680">
    <property type="term" value="P:tRNA 3'-terminal CCA addition"/>
    <property type="evidence" value="ECO:0007669"/>
    <property type="project" value="UniProtKB-UniRule"/>
</dbReference>
<dbReference type="CDD" id="cd05398">
    <property type="entry name" value="NT_ClassII-CCAase"/>
    <property type="match status" value="1"/>
</dbReference>
<dbReference type="Gene3D" id="1.10.110.30">
    <property type="match status" value="1"/>
</dbReference>
<dbReference type="Gene3D" id="1.10.246.80">
    <property type="match status" value="1"/>
</dbReference>
<dbReference type="Gene3D" id="1.20.58.560">
    <property type="match status" value="1"/>
</dbReference>
<dbReference type="Gene3D" id="3.30.460.10">
    <property type="entry name" value="Beta Polymerase, domain 2"/>
    <property type="match status" value="1"/>
</dbReference>
<dbReference type="HAMAP" id="MF_01263">
    <property type="entry name" value="CCA_bact_type3"/>
    <property type="match status" value="1"/>
</dbReference>
<dbReference type="InterPro" id="IPR050264">
    <property type="entry name" value="Bact_CCA-adding_enz_type3_sf"/>
</dbReference>
<dbReference type="InterPro" id="IPR032810">
    <property type="entry name" value="CCA-adding_enz_C"/>
</dbReference>
<dbReference type="InterPro" id="IPR023068">
    <property type="entry name" value="CCA-adding_enz_firmicutes"/>
</dbReference>
<dbReference type="InterPro" id="IPR043519">
    <property type="entry name" value="NT_sf"/>
</dbReference>
<dbReference type="InterPro" id="IPR002646">
    <property type="entry name" value="PolA_pol_head_dom"/>
</dbReference>
<dbReference type="InterPro" id="IPR032828">
    <property type="entry name" value="PolyA_RNA-bd"/>
</dbReference>
<dbReference type="NCBIfam" id="NF009814">
    <property type="entry name" value="PRK13299.1"/>
    <property type="match status" value="1"/>
</dbReference>
<dbReference type="PANTHER" id="PTHR46173">
    <property type="entry name" value="CCA TRNA NUCLEOTIDYLTRANSFERASE 1, MITOCHONDRIAL"/>
    <property type="match status" value="1"/>
</dbReference>
<dbReference type="PANTHER" id="PTHR46173:SF1">
    <property type="entry name" value="CCA TRNA NUCLEOTIDYLTRANSFERASE 1, MITOCHONDRIAL"/>
    <property type="match status" value="1"/>
</dbReference>
<dbReference type="Pfam" id="PF01743">
    <property type="entry name" value="PolyA_pol"/>
    <property type="match status" value="1"/>
</dbReference>
<dbReference type="Pfam" id="PF12627">
    <property type="entry name" value="PolyA_pol_RNAbd"/>
    <property type="match status" value="1"/>
</dbReference>
<dbReference type="Pfam" id="PF13735">
    <property type="entry name" value="tRNA_NucTran2_2"/>
    <property type="match status" value="1"/>
</dbReference>
<dbReference type="SUPFAM" id="SSF81301">
    <property type="entry name" value="Nucleotidyltransferase"/>
    <property type="match status" value="1"/>
</dbReference>
<dbReference type="SUPFAM" id="SSF81891">
    <property type="entry name" value="Poly A polymerase C-terminal region-like"/>
    <property type="match status" value="1"/>
</dbReference>
<reference key="1">
    <citation type="journal article" date="2004" name="Nat. Biotechnol.">
        <title>Complete sequence and comparative genome analysis of the dairy bacterium Streptococcus thermophilus.</title>
        <authorList>
            <person name="Bolotin A."/>
            <person name="Quinquis B."/>
            <person name="Renault P."/>
            <person name="Sorokin A."/>
            <person name="Ehrlich S.D."/>
            <person name="Kulakauskas S."/>
            <person name="Lapidus A."/>
            <person name="Goltsman E."/>
            <person name="Mazur M."/>
            <person name="Pusch G.D."/>
            <person name="Fonstein M."/>
            <person name="Overbeek R."/>
            <person name="Kyprides N."/>
            <person name="Purnelle B."/>
            <person name="Prozzi D."/>
            <person name="Ngui K."/>
            <person name="Masuy D."/>
            <person name="Hancy F."/>
            <person name="Burteau S."/>
            <person name="Boutry M."/>
            <person name="Delcour J."/>
            <person name="Goffeau A."/>
            <person name="Hols P."/>
        </authorList>
    </citation>
    <scope>NUCLEOTIDE SEQUENCE [LARGE SCALE GENOMIC DNA]</scope>
    <source>
        <strain>CNRZ 1066</strain>
    </source>
</reference>
<protein>
    <recommendedName>
        <fullName evidence="1">CCA-adding enzyme</fullName>
        <ecNumber evidence="1">2.7.7.72</ecNumber>
    </recommendedName>
    <alternativeName>
        <fullName evidence="1">CCA tRNA nucleotidyltransferase</fullName>
    </alternativeName>
    <alternativeName>
        <fullName evidence="1">tRNA CCA-pyrophosphorylase</fullName>
    </alternativeName>
    <alternativeName>
        <fullName evidence="1">tRNA adenylyl-/cytidylyl- transferase</fullName>
    </alternativeName>
    <alternativeName>
        <fullName evidence="1">tRNA nucleotidyltransferase</fullName>
    </alternativeName>
    <alternativeName>
        <fullName evidence="1">tRNA-NT</fullName>
    </alternativeName>
</protein>
<proteinExistence type="inferred from homology"/>
<comment type="function">
    <text evidence="1">Catalyzes the addition and repair of the essential 3'-terminal CCA sequence in tRNAs without using a nucleic acid template. Adds these three nucleotides in the order of C, C, and A to the tRNA nucleotide-73, using CTP and ATP as substrates and producing inorganic pyrophosphate. tRNA 3'-terminal CCA addition is required both for tRNA processing and repair. Also involved in tRNA surveillance by mediating tandem CCA addition to generate a CCACCA at the 3' terminus of unstable tRNAs. While stable tRNAs receive only 3'-terminal CCA, unstable tRNAs are marked with CCACCA and rapidly degraded.</text>
</comment>
<comment type="catalytic activity">
    <reaction evidence="1">
        <text>a tRNA precursor + 2 CTP + ATP = a tRNA with a 3' CCA end + 3 diphosphate</text>
        <dbReference type="Rhea" id="RHEA:14433"/>
        <dbReference type="Rhea" id="RHEA-COMP:10465"/>
        <dbReference type="Rhea" id="RHEA-COMP:10468"/>
        <dbReference type="ChEBI" id="CHEBI:30616"/>
        <dbReference type="ChEBI" id="CHEBI:33019"/>
        <dbReference type="ChEBI" id="CHEBI:37563"/>
        <dbReference type="ChEBI" id="CHEBI:74896"/>
        <dbReference type="ChEBI" id="CHEBI:83071"/>
        <dbReference type="EC" id="2.7.7.72"/>
    </reaction>
</comment>
<comment type="catalytic activity">
    <reaction evidence="1">
        <text>a tRNA with a 3' CCA end + 2 CTP + ATP = a tRNA with a 3' CCACCA end + 3 diphosphate</text>
        <dbReference type="Rhea" id="RHEA:76235"/>
        <dbReference type="Rhea" id="RHEA-COMP:10468"/>
        <dbReference type="Rhea" id="RHEA-COMP:18655"/>
        <dbReference type="ChEBI" id="CHEBI:30616"/>
        <dbReference type="ChEBI" id="CHEBI:33019"/>
        <dbReference type="ChEBI" id="CHEBI:37563"/>
        <dbReference type="ChEBI" id="CHEBI:83071"/>
        <dbReference type="ChEBI" id="CHEBI:195187"/>
    </reaction>
    <physiologicalReaction direction="left-to-right" evidence="1">
        <dbReference type="Rhea" id="RHEA:76236"/>
    </physiologicalReaction>
</comment>
<comment type="cofactor">
    <cofactor evidence="1">
        <name>Mg(2+)</name>
        <dbReference type="ChEBI" id="CHEBI:18420"/>
    </cofactor>
</comment>
<comment type="subunit">
    <text evidence="1">Homodimer.</text>
</comment>
<comment type="miscellaneous">
    <text evidence="1">A single active site specifically recognizes both ATP and CTP and is responsible for their addition.</text>
</comment>
<comment type="similarity">
    <text evidence="1">Belongs to the tRNA nucleotidyltransferase/poly(A) polymerase family. Bacterial CCA-adding enzyme type 3 subfamily.</text>
</comment>
<evidence type="ECO:0000255" key="1">
    <source>
        <dbReference type="HAMAP-Rule" id="MF_01263"/>
    </source>
</evidence>
<accession>Q5M153</accession>
<feature type="chain" id="PRO_0000139062" description="CCA-adding enzyme">
    <location>
        <begin position="1"/>
        <end position="402"/>
    </location>
</feature>
<feature type="binding site" evidence="1">
    <location>
        <position position="32"/>
    </location>
    <ligand>
        <name>ATP</name>
        <dbReference type="ChEBI" id="CHEBI:30616"/>
    </ligand>
</feature>
<feature type="binding site" evidence="1">
    <location>
        <position position="32"/>
    </location>
    <ligand>
        <name>CTP</name>
        <dbReference type="ChEBI" id="CHEBI:37563"/>
    </ligand>
</feature>
<feature type="binding site" evidence="1">
    <location>
        <position position="35"/>
    </location>
    <ligand>
        <name>ATP</name>
        <dbReference type="ChEBI" id="CHEBI:30616"/>
    </ligand>
</feature>
<feature type="binding site" evidence="1">
    <location>
        <position position="35"/>
    </location>
    <ligand>
        <name>CTP</name>
        <dbReference type="ChEBI" id="CHEBI:37563"/>
    </ligand>
</feature>
<feature type="binding site" evidence="1">
    <location>
        <position position="45"/>
    </location>
    <ligand>
        <name>Mg(2+)</name>
        <dbReference type="ChEBI" id="CHEBI:18420"/>
    </ligand>
</feature>
<feature type="binding site" evidence="1">
    <location>
        <position position="47"/>
    </location>
    <ligand>
        <name>Mg(2+)</name>
        <dbReference type="ChEBI" id="CHEBI:18420"/>
    </ligand>
</feature>
<feature type="binding site" evidence="1">
    <location>
        <position position="116"/>
    </location>
    <ligand>
        <name>ATP</name>
        <dbReference type="ChEBI" id="CHEBI:30616"/>
    </ligand>
</feature>
<feature type="binding site" evidence="1">
    <location>
        <position position="116"/>
    </location>
    <ligand>
        <name>CTP</name>
        <dbReference type="ChEBI" id="CHEBI:37563"/>
    </ligand>
</feature>
<feature type="binding site" evidence="1">
    <location>
        <position position="159"/>
    </location>
    <ligand>
        <name>ATP</name>
        <dbReference type="ChEBI" id="CHEBI:30616"/>
    </ligand>
</feature>
<feature type="binding site" evidence="1">
    <location>
        <position position="159"/>
    </location>
    <ligand>
        <name>CTP</name>
        <dbReference type="ChEBI" id="CHEBI:37563"/>
    </ligand>
</feature>
<feature type="binding site" evidence="1">
    <location>
        <position position="162"/>
    </location>
    <ligand>
        <name>ATP</name>
        <dbReference type="ChEBI" id="CHEBI:30616"/>
    </ligand>
</feature>
<feature type="binding site" evidence="1">
    <location>
        <position position="162"/>
    </location>
    <ligand>
        <name>CTP</name>
        <dbReference type="ChEBI" id="CHEBI:37563"/>
    </ligand>
</feature>
<feature type="binding site" evidence="1">
    <location>
        <position position="165"/>
    </location>
    <ligand>
        <name>ATP</name>
        <dbReference type="ChEBI" id="CHEBI:30616"/>
    </ligand>
</feature>
<feature type="binding site" evidence="1">
    <location>
        <position position="165"/>
    </location>
    <ligand>
        <name>CTP</name>
        <dbReference type="ChEBI" id="CHEBI:37563"/>
    </ligand>
</feature>
<feature type="binding site" evidence="1">
    <location>
        <position position="168"/>
    </location>
    <ligand>
        <name>ATP</name>
        <dbReference type="ChEBI" id="CHEBI:30616"/>
    </ligand>
</feature>
<feature type="binding site" evidence="1">
    <location>
        <position position="168"/>
    </location>
    <ligand>
        <name>CTP</name>
        <dbReference type="ChEBI" id="CHEBI:37563"/>
    </ligand>
</feature>